<evidence type="ECO:0000250" key="1">
    <source>
        <dbReference type="UniProtKB" id="F6RG56"/>
    </source>
</evidence>
<evidence type="ECO:0000250" key="2">
    <source>
        <dbReference type="UniProtKB" id="Q8R4F0"/>
    </source>
</evidence>
<evidence type="ECO:0000250" key="3">
    <source>
        <dbReference type="UniProtKB" id="Q9GZU1"/>
    </source>
</evidence>
<evidence type="ECO:0000255" key="4"/>
<evidence type="ECO:0000269" key="5">
    <source>
    </source>
</evidence>
<evidence type="ECO:0000269" key="6">
    <source>
    </source>
</evidence>
<evidence type="ECO:0000269" key="7">
    <source>
    </source>
</evidence>
<evidence type="ECO:0000269" key="8">
    <source>
    </source>
</evidence>
<evidence type="ECO:0000269" key="9">
    <source>
    </source>
</evidence>
<evidence type="ECO:0000269" key="10">
    <source>
    </source>
</evidence>
<evidence type="ECO:0000269" key="11">
    <source>
    </source>
</evidence>
<evidence type="ECO:0000269" key="12">
    <source>
    </source>
</evidence>
<evidence type="ECO:0000303" key="13">
    <source>
    </source>
</evidence>
<evidence type="ECO:0000303" key="14">
    <source>
    </source>
</evidence>
<evidence type="ECO:0000303" key="15">
    <source>
    </source>
</evidence>
<evidence type="ECO:0000305" key="16"/>
<evidence type="ECO:0000305" key="17">
    <source>
    </source>
</evidence>
<gene>
    <name type="primary">MCOLN3</name>
</gene>
<dbReference type="EMBL" id="AF475085">
    <property type="protein sequence ID" value="AAL84622.1"/>
    <property type="molecule type" value="mRNA"/>
</dbReference>
<dbReference type="EMBL" id="AK001868">
    <property type="protein sequence ID" value="BAA91951.1"/>
    <property type="molecule type" value="mRNA"/>
</dbReference>
<dbReference type="EMBL" id="AL358789">
    <property type="status" value="NOT_ANNOTATED_CDS"/>
    <property type="molecule type" value="Genomic_DNA"/>
</dbReference>
<dbReference type="CCDS" id="CCDS58009.1">
    <molecule id="Q8TDD5-2"/>
</dbReference>
<dbReference type="CCDS" id="CCDS701.1">
    <molecule id="Q8TDD5-1"/>
</dbReference>
<dbReference type="RefSeq" id="NP_001240622.1">
    <molecule id="Q8TDD5-2"/>
    <property type="nucleotide sequence ID" value="NM_001253693.2"/>
</dbReference>
<dbReference type="RefSeq" id="NP_060768.8">
    <molecule id="Q8TDD5-1"/>
    <property type="nucleotide sequence ID" value="NM_018298.10"/>
</dbReference>
<dbReference type="RefSeq" id="XP_005271060.1">
    <molecule id="Q8TDD5-1"/>
    <property type="nucleotide sequence ID" value="XM_005271003.2"/>
</dbReference>
<dbReference type="RefSeq" id="XP_006710813.1">
    <property type="nucleotide sequence ID" value="XM_006710750.1"/>
</dbReference>
<dbReference type="RefSeq" id="XP_054193471.1">
    <molecule id="Q8TDD5-1"/>
    <property type="nucleotide sequence ID" value="XM_054337496.1"/>
</dbReference>
<dbReference type="PDB" id="6AYE">
    <property type="method" value="EM"/>
    <property type="resolution" value="4.06 A"/>
    <property type="chains" value="A/B/C/D=1-553"/>
</dbReference>
<dbReference type="PDB" id="6AYF">
    <property type="method" value="EM"/>
    <property type="resolution" value="3.62 A"/>
    <property type="chains" value="A/B/C/D=1-553"/>
</dbReference>
<dbReference type="PDB" id="6AYG">
    <property type="method" value="EM"/>
    <property type="resolution" value="4.65 A"/>
    <property type="chains" value="A/B/C/D=1-553"/>
</dbReference>
<dbReference type="PDBsum" id="6AYE"/>
<dbReference type="PDBsum" id="6AYF"/>
<dbReference type="PDBsum" id="6AYG"/>
<dbReference type="EMDB" id="EMD-7018"/>
<dbReference type="EMDB" id="EMD-7019"/>
<dbReference type="EMDB" id="EMD-7020"/>
<dbReference type="SMR" id="Q8TDD5"/>
<dbReference type="BioGRID" id="120571">
    <property type="interactions" value="68"/>
</dbReference>
<dbReference type="FunCoup" id="Q8TDD5">
    <property type="interactions" value="478"/>
</dbReference>
<dbReference type="IntAct" id="Q8TDD5">
    <property type="interactions" value="45"/>
</dbReference>
<dbReference type="STRING" id="9606.ENSP00000359621"/>
<dbReference type="BindingDB" id="Q8TDD5"/>
<dbReference type="ChEMBL" id="CHEMBL1293243"/>
<dbReference type="GuidetoPHARMACOLOGY" id="503"/>
<dbReference type="TCDB" id="1.A.5.3.4">
    <property type="family name" value="the polycystin cation channel (pcc) family"/>
</dbReference>
<dbReference type="GlyConnect" id="1522">
    <property type="glycosylation" value="2 N-Linked glycans (1 site)"/>
</dbReference>
<dbReference type="GlyCosmos" id="Q8TDD5">
    <property type="glycosylation" value="3 sites, 2 glycans"/>
</dbReference>
<dbReference type="GlyGen" id="Q8TDD5">
    <property type="glycosylation" value="4 sites, 4 N-linked glycans (2 sites)"/>
</dbReference>
<dbReference type="iPTMnet" id="Q8TDD5"/>
<dbReference type="PhosphoSitePlus" id="Q8TDD5"/>
<dbReference type="SwissPalm" id="Q8TDD5"/>
<dbReference type="BioMuta" id="MCOLN3"/>
<dbReference type="DMDM" id="50401084"/>
<dbReference type="jPOST" id="Q8TDD5"/>
<dbReference type="MassIVE" id="Q8TDD5"/>
<dbReference type="PaxDb" id="9606-ENSP00000359621"/>
<dbReference type="PeptideAtlas" id="Q8TDD5"/>
<dbReference type="ProteomicsDB" id="74270">
    <molecule id="Q8TDD5-1"/>
</dbReference>
<dbReference type="ProteomicsDB" id="74271">
    <molecule id="Q8TDD5-2"/>
</dbReference>
<dbReference type="ABCD" id="Q8TDD5">
    <property type="antibodies" value="1 sequenced antibody"/>
</dbReference>
<dbReference type="Antibodypedia" id="19787">
    <property type="antibodies" value="157 antibodies from 28 providers"/>
</dbReference>
<dbReference type="DNASU" id="55283"/>
<dbReference type="Ensembl" id="ENST00000341115.8">
    <molecule id="Q8TDD5-2"/>
    <property type="protein sequence ID" value="ENSP00000342698.3"/>
    <property type="gene ID" value="ENSG00000055732.13"/>
</dbReference>
<dbReference type="Ensembl" id="ENST00000370589.7">
    <molecule id="Q8TDD5-1"/>
    <property type="protein sequence ID" value="ENSP00000359621.1"/>
    <property type="gene ID" value="ENSG00000055732.13"/>
</dbReference>
<dbReference type="GeneID" id="55283"/>
<dbReference type="KEGG" id="hsa:55283"/>
<dbReference type="MANE-Select" id="ENST00000370589.7">
    <property type="protein sequence ID" value="ENSP00000359621.1"/>
    <property type="RefSeq nucleotide sequence ID" value="NM_018298.11"/>
    <property type="RefSeq protein sequence ID" value="NP_060768.8"/>
</dbReference>
<dbReference type="UCSC" id="uc001dkp.4">
    <molecule id="Q8TDD5-1"/>
    <property type="organism name" value="human"/>
</dbReference>
<dbReference type="AGR" id="HGNC:13358"/>
<dbReference type="CTD" id="55283"/>
<dbReference type="DisGeNET" id="55283"/>
<dbReference type="GeneCards" id="MCOLN3"/>
<dbReference type="HGNC" id="HGNC:13358">
    <property type="gene designation" value="MCOLN3"/>
</dbReference>
<dbReference type="HPA" id="ENSG00000055732">
    <property type="expression patterns" value="Group enriched (adrenal gland, epididymis, parathyroid gland)"/>
</dbReference>
<dbReference type="MIM" id="607400">
    <property type="type" value="gene"/>
</dbReference>
<dbReference type="neXtProt" id="NX_Q8TDD5"/>
<dbReference type="OpenTargets" id="ENSG00000055732"/>
<dbReference type="PharmGKB" id="PA134947324"/>
<dbReference type="VEuPathDB" id="HostDB:ENSG00000055732"/>
<dbReference type="eggNOG" id="KOG3733">
    <property type="taxonomic scope" value="Eukaryota"/>
</dbReference>
<dbReference type="GeneTree" id="ENSGT00950000183036"/>
<dbReference type="HOGENOM" id="CLU_020945_1_1_1"/>
<dbReference type="InParanoid" id="Q8TDD5"/>
<dbReference type="OMA" id="WQARRKF"/>
<dbReference type="OrthoDB" id="263481at2759"/>
<dbReference type="PAN-GO" id="Q8TDD5">
    <property type="GO annotations" value="3 GO annotations based on evolutionary models"/>
</dbReference>
<dbReference type="PhylomeDB" id="Q8TDD5"/>
<dbReference type="TreeFam" id="TF317783"/>
<dbReference type="PathwayCommons" id="Q8TDD5"/>
<dbReference type="Reactome" id="R-HSA-3295583">
    <property type="pathway name" value="TRP channels"/>
</dbReference>
<dbReference type="SignaLink" id="Q8TDD5"/>
<dbReference type="BioGRID-ORCS" id="55283">
    <property type="hits" value="15 hits in 1145 CRISPR screens"/>
</dbReference>
<dbReference type="ChiTaRS" id="MCOLN3">
    <property type="organism name" value="human"/>
</dbReference>
<dbReference type="GeneWiki" id="MCOLN3"/>
<dbReference type="GenomeRNAi" id="55283"/>
<dbReference type="Pharos" id="Q8TDD5">
    <property type="development level" value="Tchem"/>
</dbReference>
<dbReference type="PRO" id="PR:Q8TDD5"/>
<dbReference type="Proteomes" id="UP000005640">
    <property type="component" value="Chromosome 1"/>
</dbReference>
<dbReference type="RNAct" id="Q8TDD5">
    <property type="molecule type" value="protein"/>
</dbReference>
<dbReference type="Bgee" id="ENSG00000055732">
    <property type="expression patterns" value="Expressed in right adrenal gland cortex and 147 other cell types or tissues"/>
</dbReference>
<dbReference type="ExpressionAtlas" id="Q8TDD5">
    <property type="expression patterns" value="baseline and differential"/>
</dbReference>
<dbReference type="GO" id="GO:0000421">
    <property type="term" value="C:autophagosome membrane"/>
    <property type="evidence" value="ECO:0007669"/>
    <property type="project" value="UniProtKB-SubCell"/>
</dbReference>
<dbReference type="GO" id="GO:0031901">
    <property type="term" value="C:early endosome membrane"/>
    <property type="evidence" value="ECO:0007669"/>
    <property type="project" value="UniProtKB-SubCell"/>
</dbReference>
<dbReference type="GO" id="GO:0031902">
    <property type="term" value="C:late endosome membrane"/>
    <property type="evidence" value="ECO:0007669"/>
    <property type="project" value="UniProtKB-SubCell"/>
</dbReference>
<dbReference type="GO" id="GO:0005765">
    <property type="term" value="C:lysosomal membrane"/>
    <property type="evidence" value="ECO:0000318"/>
    <property type="project" value="GO_Central"/>
</dbReference>
<dbReference type="GO" id="GO:0005886">
    <property type="term" value="C:plasma membrane"/>
    <property type="evidence" value="ECO:0000318"/>
    <property type="project" value="GO_Central"/>
</dbReference>
<dbReference type="GO" id="GO:0005262">
    <property type="term" value="F:calcium channel activity"/>
    <property type="evidence" value="ECO:0000304"/>
    <property type="project" value="Reactome"/>
</dbReference>
<dbReference type="GO" id="GO:0008289">
    <property type="term" value="F:lipid binding"/>
    <property type="evidence" value="ECO:0007669"/>
    <property type="project" value="UniProtKB-KW"/>
</dbReference>
<dbReference type="GO" id="GO:0005253">
    <property type="term" value="F:monoatomic anion channel activity"/>
    <property type="evidence" value="ECO:0000250"/>
    <property type="project" value="UniProtKB"/>
</dbReference>
<dbReference type="GO" id="GO:0072345">
    <property type="term" value="F:NAADP-sensitive calcium-release channel activity"/>
    <property type="evidence" value="ECO:0000318"/>
    <property type="project" value="GO_Central"/>
</dbReference>
<dbReference type="GO" id="GO:0005267">
    <property type="term" value="F:potassium channel activity"/>
    <property type="evidence" value="ECO:0000250"/>
    <property type="project" value="UniProtKB"/>
</dbReference>
<dbReference type="GO" id="GO:0005272">
    <property type="term" value="F:sodium channel activity"/>
    <property type="evidence" value="ECO:0000250"/>
    <property type="project" value="UniProtKB"/>
</dbReference>
<dbReference type="GO" id="GO:0070588">
    <property type="term" value="P:calcium ion transmembrane transport"/>
    <property type="evidence" value="ECO:0000304"/>
    <property type="project" value="Reactome"/>
</dbReference>
<dbReference type="GO" id="GO:0042491">
    <property type="term" value="P:inner ear auditory receptor cell differentiation"/>
    <property type="evidence" value="ECO:0007669"/>
    <property type="project" value="Ensembl"/>
</dbReference>
<dbReference type="GO" id="GO:0007626">
    <property type="term" value="P:locomotory behavior"/>
    <property type="evidence" value="ECO:0007669"/>
    <property type="project" value="Ensembl"/>
</dbReference>
<dbReference type="CDD" id="cd21072">
    <property type="entry name" value="ELD_TRPML3"/>
    <property type="match status" value="1"/>
</dbReference>
<dbReference type="FunFam" id="1.10.287.70:FF:000033">
    <property type="entry name" value="Mucolipin 1"/>
    <property type="match status" value="1"/>
</dbReference>
<dbReference type="Gene3D" id="1.10.287.70">
    <property type="match status" value="1"/>
</dbReference>
<dbReference type="InterPro" id="IPR049134">
    <property type="entry name" value="MCLN_ECD"/>
</dbReference>
<dbReference type="InterPro" id="IPR047317">
    <property type="entry name" value="MCOLN3_ELD"/>
</dbReference>
<dbReference type="InterPro" id="IPR039031">
    <property type="entry name" value="Mucolipin"/>
</dbReference>
<dbReference type="InterPro" id="IPR013122">
    <property type="entry name" value="PKD1_2_channel"/>
</dbReference>
<dbReference type="PANTHER" id="PTHR12127">
    <property type="entry name" value="MUCOLIPIN"/>
    <property type="match status" value="1"/>
</dbReference>
<dbReference type="PANTHER" id="PTHR12127:SF5">
    <property type="entry name" value="MUCOLIPIN-3"/>
    <property type="match status" value="1"/>
</dbReference>
<dbReference type="Pfam" id="PF21381">
    <property type="entry name" value="MCLN_ECD"/>
    <property type="match status" value="1"/>
</dbReference>
<dbReference type="Pfam" id="PF08016">
    <property type="entry name" value="PKD_channel"/>
    <property type="match status" value="1"/>
</dbReference>
<accession>Q8TDD5</accession>
<accession>Q5T4H5</accession>
<accession>Q5T4H6</accession>
<accession>Q9NV09</accession>
<reference key="1">
    <citation type="submission" date="2002-01" db="EMBL/GenBank/DDBJ databases">
        <title>Cloning of the MCOLN3 gene.</title>
        <authorList>
            <person name="Falardeau J.L."/>
            <person name="Kennedy J.C."/>
            <person name="Acierno J.S. Jr."/>
            <person name="Slaugenhaupt S.A."/>
        </authorList>
    </citation>
    <scope>NUCLEOTIDE SEQUENCE [MRNA] (ISOFORM 1)</scope>
</reference>
<reference key="2">
    <citation type="journal article" date="2004" name="Nat. Genet.">
        <title>Complete sequencing and characterization of 21,243 full-length human cDNAs.</title>
        <authorList>
            <person name="Ota T."/>
            <person name="Suzuki Y."/>
            <person name="Nishikawa T."/>
            <person name="Otsuki T."/>
            <person name="Sugiyama T."/>
            <person name="Irie R."/>
            <person name="Wakamatsu A."/>
            <person name="Hayashi K."/>
            <person name="Sato H."/>
            <person name="Nagai K."/>
            <person name="Kimura K."/>
            <person name="Makita H."/>
            <person name="Sekine M."/>
            <person name="Obayashi M."/>
            <person name="Nishi T."/>
            <person name="Shibahara T."/>
            <person name="Tanaka T."/>
            <person name="Ishii S."/>
            <person name="Yamamoto J."/>
            <person name="Saito K."/>
            <person name="Kawai Y."/>
            <person name="Isono Y."/>
            <person name="Nakamura Y."/>
            <person name="Nagahari K."/>
            <person name="Murakami K."/>
            <person name="Yasuda T."/>
            <person name="Iwayanagi T."/>
            <person name="Wagatsuma M."/>
            <person name="Shiratori A."/>
            <person name="Sudo H."/>
            <person name="Hosoiri T."/>
            <person name="Kaku Y."/>
            <person name="Kodaira H."/>
            <person name="Kondo H."/>
            <person name="Sugawara M."/>
            <person name="Takahashi M."/>
            <person name="Kanda K."/>
            <person name="Yokoi T."/>
            <person name="Furuya T."/>
            <person name="Kikkawa E."/>
            <person name="Omura Y."/>
            <person name="Abe K."/>
            <person name="Kamihara K."/>
            <person name="Katsuta N."/>
            <person name="Sato K."/>
            <person name="Tanikawa M."/>
            <person name="Yamazaki M."/>
            <person name="Ninomiya K."/>
            <person name="Ishibashi T."/>
            <person name="Yamashita H."/>
            <person name="Murakawa K."/>
            <person name="Fujimori K."/>
            <person name="Tanai H."/>
            <person name="Kimata M."/>
            <person name="Watanabe M."/>
            <person name="Hiraoka S."/>
            <person name="Chiba Y."/>
            <person name="Ishida S."/>
            <person name="Ono Y."/>
            <person name="Takiguchi S."/>
            <person name="Watanabe S."/>
            <person name="Yosida M."/>
            <person name="Hotuta T."/>
            <person name="Kusano J."/>
            <person name="Kanehori K."/>
            <person name="Takahashi-Fujii A."/>
            <person name="Hara H."/>
            <person name="Tanase T.-O."/>
            <person name="Nomura Y."/>
            <person name="Togiya S."/>
            <person name="Komai F."/>
            <person name="Hara R."/>
            <person name="Takeuchi K."/>
            <person name="Arita M."/>
            <person name="Imose N."/>
            <person name="Musashino K."/>
            <person name="Yuuki H."/>
            <person name="Oshima A."/>
            <person name="Sasaki N."/>
            <person name="Aotsuka S."/>
            <person name="Yoshikawa Y."/>
            <person name="Matsunawa H."/>
            <person name="Ichihara T."/>
            <person name="Shiohata N."/>
            <person name="Sano S."/>
            <person name="Moriya S."/>
            <person name="Momiyama H."/>
            <person name="Satoh N."/>
            <person name="Takami S."/>
            <person name="Terashima Y."/>
            <person name="Suzuki O."/>
            <person name="Nakagawa S."/>
            <person name="Senoh A."/>
            <person name="Mizoguchi H."/>
            <person name="Goto Y."/>
            <person name="Shimizu F."/>
            <person name="Wakebe H."/>
            <person name="Hishigaki H."/>
            <person name="Watanabe T."/>
            <person name="Sugiyama A."/>
            <person name="Takemoto M."/>
            <person name="Kawakami B."/>
            <person name="Yamazaki M."/>
            <person name="Watanabe K."/>
            <person name="Kumagai A."/>
            <person name="Itakura S."/>
            <person name="Fukuzumi Y."/>
            <person name="Fujimori Y."/>
            <person name="Komiyama M."/>
            <person name="Tashiro H."/>
            <person name="Tanigami A."/>
            <person name="Fujiwara T."/>
            <person name="Ono T."/>
            <person name="Yamada K."/>
            <person name="Fujii Y."/>
            <person name="Ozaki K."/>
            <person name="Hirao M."/>
            <person name="Ohmori Y."/>
            <person name="Kawabata A."/>
            <person name="Hikiji T."/>
            <person name="Kobatake N."/>
            <person name="Inagaki H."/>
            <person name="Ikema Y."/>
            <person name="Okamoto S."/>
            <person name="Okitani R."/>
            <person name="Kawakami T."/>
            <person name="Noguchi S."/>
            <person name="Itoh T."/>
            <person name="Shigeta K."/>
            <person name="Senba T."/>
            <person name="Matsumura K."/>
            <person name="Nakajima Y."/>
            <person name="Mizuno T."/>
            <person name="Morinaga M."/>
            <person name="Sasaki M."/>
            <person name="Togashi T."/>
            <person name="Oyama M."/>
            <person name="Hata H."/>
            <person name="Watanabe M."/>
            <person name="Komatsu T."/>
            <person name="Mizushima-Sugano J."/>
            <person name="Satoh T."/>
            <person name="Shirai Y."/>
            <person name="Takahashi Y."/>
            <person name="Nakagawa K."/>
            <person name="Okumura K."/>
            <person name="Nagase T."/>
            <person name="Nomura N."/>
            <person name="Kikuchi H."/>
            <person name="Masuho Y."/>
            <person name="Yamashita R."/>
            <person name="Nakai K."/>
            <person name="Yada T."/>
            <person name="Nakamura Y."/>
            <person name="Ohara O."/>
            <person name="Isogai T."/>
            <person name="Sugano S."/>
        </authorList>
    </citation>
    <scope>NUCLEOTIDE SEQUENCE [LARGE SCALE MRNA] (ISOFORM 2)</scope>
    <source>
        <tissue>Placenta</tissue>
    </source>
</reference>
<reference key="3">
    <citation type="journal article" date="2006" name="Nature">
        <title>The DNA sequence and biological annotation of human chromosome 1.</title>
        <authorList>
            <person name="Gregory S.G."/>
            <person name="Barlow K.F."/>
            <person name="McLay K.E."/>
            <person name="Kaul R."/>
            <person name="Swarbreck D."/>
            <person name="Dunham A."/>
            <person name="Scott C.E."/>
            <person name="Howe K.L."/>
            <person name="Woodfine K."/>
            <person name="Spencer C.C.A."/>
            <person name="Jones M.C."/>
            <person name="Gillson C."/>
            <person name="Searle S."/>
            <person name="Zhou Y."/>
            <person name="Kokocinski F."/>
            <person name="McDonald L."/>
            <person name="Evans R."/>
            <person name="Phillips K."/>
            <person name="Atkinson A."/>
            <person name="Cooper R."/>
            <person name="Jones C."/>
            <person name="Hall R.E."/>
            <person name="Andrews T.D."/>
            <person name="Lloyd C."/>
            <person name="Ainscough R."/>
            <person name="Almeida J.P."/>
            <person name="Ambrose K.D."/>
            <person name="Anderson F."/>
            <person name="Andrew R.W."/>
            <person name="Ashwell R.I.S."/>
            <person name="Aubin K."/>
            <person name="Babbage A.K."/>
            <person name="Bagguley C.L."/>
            <person name="Bailey J."/>
            <person name="Beasley H."/>
            <person name="Bethel G."/>
            <person name="Bird C.P."/>
            <person name="Bray-Allen S."/>
            <person name="Brown J.Y."/>
            <person name="Brown A.J."/>
            <person name="Buckley D."/>
            <person name="Burton J."/>
            <person name="Bye J."/>
            <person name="Carder C."/>
            <person name="Chapman J.C."/>
            <person name="Clark S.Y."/>
            <person name="Clarke G."/>
            <person name="Clee C."/>
            <person name="Cobley V."/>
            <person name="Collier R.E."/>
            <person name="Corby N."/>
            <person name="Coville G.J."/>
            <person name="Davies J."/>
            <person name="Deadman R."/>
            <person name="Dunn M."/>
            <person name="Earthrowl M."/>
            <person name="Ellington A.G."/>
            <person name="Errington H."/>
            <person name="Frankish A."/>
            <person name="Frankland J."/>
            <person name="French L."/>
            <person name="Garner P."/>
            <person name="Garnett J."/>
            <person name="Gay L."/>
            <person name="Ghori M.R.J."/>
            <person name="Gibson R."/>
            <person name="Gilby L.M."/>
            <person name="Gillett W."/>
            <person name="Glithero R.J."/>
            <person name="Grafham D.V."/>
            <person name="Griffiths C."/>
            <person name="Griffiths-Jones S."/>
            <person name="Grocock R."/>
            <person name="Hammond S."/>
            <person name="Harrison E.S.I."/>
            <person name="Hart E."/>
            <person name="Haugen E."/>
            <person name="Heath P.D."/>
            <person name="Holmes S."/>
            <person name="Holt K."/>
            <person name="Howden P.J."/>
            <person name="Hunt A.R."/>
            <person name="Hunt S.E."/>
            <person name="Hunter G."/>
            <person name="Isherwood J."/>
            <person name="James R."/>
            <person name="Johnson C."/>
            <person name="Johnson D."/>
            <person name="Joy A."/>
            <person name="Kay M."/>
            <person name="Kershaw J.K."/>
            <person name="Kibukawa M."/>
            <person name="Kimberley A.M."/>
            <person name="King A."/>
            <person name="Knights A.J."/>
            <person name="Lad H."/>
            <person name="Laird G."/>
            <person name="Lawlor S."/>
            <person name="Leongamornlert D.A."/>
            <person name="Lloyd D.M."/>
            <person name="Loveland J."/>
            <person name="Lovell J."/>
            <person name="Lush M.J."/>
            <person name="Lyne R."/>
            <person name="Martin S."/>
            <person name="Mashreghi-Mohammadi M."/>
            <person name="Matthews L."/>
            <person name="Matthews N.S.W."/>
            <person name="McLaren S."/>
            <person name="Milne S."/>
            <person name="Mistry S."/>
            <person name="Moore M.J.F."/>
            <person name="Nickerson T."/>
            <person name="O'Dell C.N."/>
            <person name="Oliver K."/>
            <person name="Palmeiri A."/>
            <person name="Palmer S.A."/>
            <person name="Parker A."/>
            <person name="Patel D."/>
            <person name="Pearce A.V."/>
            <person name="Peck A.I."/>
            <person name="Pelan S."/>
            <person name="Phelps K."/>
            <person name="Phillimore B.J."/>
            <person name="Plumb R."/>
            <person name="Rajan J."/>
            <person name="Raymond C."/>
            <person name="Rouse G."/>
            <person name="Saenphimmachak C."/>
            <person name="Sehra H.K."/>
            <person name="Sheridan E."/>
            <person name="Shownkeen R."/>
            <person name="Sims S."/>
            <person name="Skuce C.D."/>
            <person name="Smith M."/>
            <person name="Steward C."/>
            <person name="Subramanian S."/>
            <person name="Sycamore N."/>
            <person name="Tracey A."/>
            <person name="Tromans A."/>
            <person name="Van Helmond Z."/>
            <person name="Wall M."/>
            <person name="Wallis J.M."/>
            <person name="White S."/>
            <person name="Whitehead S.L."/>
            <person name="Wilkinson J.E."/>
            <person name="Willey D.L."/>
            <person name="Williams H."/>
            <person name="Wilming L."/>
            <person name="Wray P.W."/>
            <person name="Wu Z."/>
            <person name="Coulson A."/>
            <person name="Vaudin M."/>
            <person name="Sulston J.E."/>
            <person name="Durbin R.M."/>
            <person name="Hubbard T."/>
            <person name="Wooster R."/>
            <person name="Dunham I."/>
            <person name="Carter N.P."/>
            <person name="McVean G."/>
            <person name="Ross M.T."/>
            <person name="Harrow J."/>
            <person name="Olson M.V."/>
            <person name="Beck S."/>
            <person name="Rogers J."/>
            <person name="Bentley D.R."/>
        </authorList>
    </citation>
    <scope>NUCLEOTIDE SEQUENCE [LARGE SCALE GENOMIC DNA]</scope>
</reference>
<reference key="4">
    <citation type="journal article" date="2008" name="EMBO J.">
        <title>A novel mode of TRPML3 regulation by extracytosolic pH absent in the varitint-waddler phenotype.</title>
        <authorList>
            <person name="Kim H.J."/>
            <person name="Li Q."/>
            <person name="Tjon-Kon-Sang S."/>
            <person name="So I."/>
            <person name="Kiselyov K."/>
            <person name="Soyombo A.A."/>
            <person name="Muallem S."/>
        </authorList>
    </citation>
    <scope>FUNCTION</scope>
    <scope>TRANSPORTER ACTIVITY</scope>
    <scope>ACTIVITY REGULATION</scope>
    <scope>MUTAGENESIS OF HIS-252; HIS-273; HIS-283 AND ALA-419</scope>
</reference>
<reference key="5">
    <citation type="journal article" date="2009" name="Traffic">
        <title>The calcium channel mucolipin-3 is a novel regulator of trafficking along the endosomal pathway.</title>
        <authorList>
            <person name="Martina J.A."/>
            <person name="Lelouvier B."/>
            <person name="Puertollano R."/>
        </authorList>
    </citation>
    <scope>FUNCTION</scope>
    <scope>SUBCELLULAR LOCATION</scope>
</reference>
<reference key="6">
    <citation type="journal article" date="2009" name="Traffic">
        <title>The Ca(2+) channel TRPML3 regulates membrane trafficking and autophagy.</title>
        <authorList>
            <person name="Kim H.J."/>
            <person name="Soyombo A.A."/>
            <person name="Tjon-Kon-Sang S."/>
            <person name="So I."/>
            <person name="Muallem S."/>
        </authorList>
    </citation>
    <scope>FUNCTION</scope>
    <scope>SUBCELLULAR LOCATION</scope>
    <scope>GLYCOSYLATION</scope>
    <scope>MUTAGENESIS OF ASP-458 AND 458-ASP-ASP-459</scope>
</reference>
<reference key="7">
    <citation type="journal article" date="2010" name="J. Biol. Chem.">
        <title>Properties of the TRPML3 channel pore and its stable expansion by the Varitint-Waddler-causing mutation.</title>
        <authorList>
            <person name="Kim H.J."/>
            <person name="Yamaguchi S."/>
            <person name="Li Q."/>
            <person name="So I."/>
            <person name="Muallem S."/>
        </authorList>
    </citation>
    <scope>FUNCTION</scope>
    <scope>ACTIVITY REGULATION</scope>
    <scope>MUTAGENESIS OF HIS-283; ALA-419; GLU-449 AND ASP-459</scope>
</reference>
<reference key="8">
    <citation type="journal article" date="2010" name="J. Cell. Physiol.">
        <title>Functional multimerization of mucolipin channel proteins.</title>
        <authorList>
            <person name="Curcio-Morelli C."/>
            <person name="Zhang P."/>
            <person name="Venugopal B."/>
            <person name="Charles F.A."/>
            <person name="Browning M.F."/>
            <person name="Cantiello H.F."/>
            <person name="Slaugenhaupt S.A."/>
        </authorList>
    </citation>
    <scope>SUBUNIT</scope>
    <scope>FUNCTION</scope>
</reference>
<reference key="9">
    <citation type="journal article" date="2011" name="J. Biol. Chem.">
        <title>Mucolipin-3 regulates luminal calcium, acidification, and membrane fusion in the endosomal pathway.</title>
        <authorList>
            <person name="Lelouvier B."/>
            <person name="Puertollano R."/>
        </authorList>
    </citation>
    <scope>FUNCTION</scope>
</reference>
<reference key="10">
    <citation type="journal article" date="2013" name="PLoS ONE">
        <title>A novel ion channel formed by interaction of TRPML3 with TRPV5.</title>
        <authorList>
            <person name="Guo Z."/>
            <person name="Grimm C."/>
            <person name="Becker L."/>
            <person name="Ricci A.J."/>
            <person name="Heller S."/>
        </authorList>
    </citation>
    <scope>FUNCTION</scope>
    <scope>SUBUNIT</scope>
</reference>
<reference key="11">
    <citation type="journal article" date="2017" name="Nat. Struct. Mol. Biol.">
        <title>Cryo-EM structures of the human endolysosomal TRPML3 channel in three distinct states.</title>
        <authorList>
            <person name="Zhou X."/>
            <person name="Li M."/>
            <person name="Su D."/>
            <person name="Jia Q."/>
            <person name="Li H."/>
            <person name="Li X."/>
            <person name="Yang J."/>
        </authorList>
    </citation>
    <scope>STRUCTURE BY ELECTRON MICROSCOPY (3.62 ANGSTROMS)</scope>
    <scope>FUNCTION</scope>
    <scope>ACTIVITY REGULATION</scope>
    <scope>SUBCELLULAR LOCATION</scope>
    <scope>TOPOLOGY</scope>
    <scope>SUBUNIT</scope>
    <scope>GLYCOSYLATION AT ASN-138 AND ASN-172</scope>
    <scope>MUTAGENESIS OF ASP-108; ASP-111; ASP-112; TYR-423 AND PHE-497</scope>
</reference>
<organism>
    <name type="scientific">Homo sapiens</name>
    <name type="common">Human</name>
    <dbReference type="NCBI Taxonomy" id="9606"/>
    <lineage>
        <taxon>Eukaryota</taxon>
        <taxon>Metazoa</taxon>
        <taxon>Chordata</taxon>
        <taxon>Craniata</taxon>
        <taxon>Vertebrata</taxon>
        <taxon>Euteleostomi</taxon>
        <taxon>Mammalia</taxon>
        <taxon>Eutheria</taxon>
        <taxon>Euarchontoglires</taxon>
        <taxon>Primates</taxon>
        <taxon>Haplorrhini</taxon>
        <taxon>Catarrhini</taxon>
        <taxon>Hominidae</taxon>
        <taxon>Homo</taxon>
    </lineage>
</organism>
<feature type="chain" id="PRO_0000215367" description="Mucolipin-3">
    <location>
        <begin position="1"/>
        <end position="553"/>
    </location>
</feature>
<feature type="topological domain" description="Cytoplasmic" evidence="12">
    <location>
        <begin position="1"/>
        <end position="62"/>
    </location>
</feature>
<feature type="transmembrane region" description="Helical" evidence="12">
    <location>
        <begin position="63"/>
        <end position="83"/>
    </location>
</feature>
<feature type="topological domain" description="Extracellular" evidence="12">
    <location>
        <begin position="84"/>
        <end position="283"/>
    </location>
</feature>
<feature type="transmembrane region" description="Helical" evidence="12">
    <location>
        <begin position="284"/>
        <end position="304"/>
    </location>
</feature>
<feature type="topological domain" description="Cytoplasmic" evidence="12">
    <location>
        <begin position="305"/>
        <end position="341"/>
    </location>
</feature>
<feature type="transmembrane region" description="Helical" evidence="12">
    <location>
        <begin position="342"/>
        <end position="362"/>
    </location>
</feature>
<feature type="topological domain" description="Extracellular" evidence="12">
    <location>
        <begin position="363"/>
        <end position="371"/>
    </location>
</feature>
<feature type="transmembrane region" description="Helical" evidence="12">
    <location>
        <begin position="372"/>
        <end position="392"/>
    </location>
</feature>
<feature type="topological domain" description="Cytoplasmic" evidence="12">
    <location>
        <begin position="393"/>
        <end position="414"/>
    </location>
</feature>
<feature type="transmembrane region" description="Helical" evidence="12">
    <location>
        <begin position="415"/>
        <end position="435"/>
    </location>
</feature>
<feature type="topological domain" description="Extracellular" evidence="12">
    <location>
        <begin position="436"/>
        <end position="443"/>
    </location>
</feature>
<feature type="intramembrane region" description="Pore-forming" evidence="12">
    <location>
        <begin position="444"/>
        <end position="464"/>
    </location>
</feature>
<feature type="topological domain" description="Extracellular" evidence="12">
    <location>
        <begin position="465"/>
        <end position="475"/>
    </location>
</feature>
<feature type="transmembrane region" description="Helical" evidence="12">
    <location>
        <begin position="476"/>
        <end position="497"/>
    </location>
</feature>
<feature type="topological domain" description="Cytoplasmic" evidence="12">
    <location>
        <begin position="498"/>
        <end position="553"/>
    </location>
</feature>
<feature type="region of interest" description="Interaction with phosphoinositides" evidence="1">
    <location>
        <begin position="52"/>
        <end position="62"/>
    </location>
</feature>
<feature type="region of interest" description="Extracellular/lumenal pore loop" evidence="3">
    <location>
        <begin position="104"/>
        <end position="118"/>
    </location>
</feature>
<feature type="short sequence motif" description="Selectivity filter" evidence="12">
    <location>
        <begin position="456"/>
        <end position="459"/>
    </location>
</feature>
<feature type="site" description="Interaction with phosphoinositides" evidence="1">
    <location>
        <position position="305"/>
    </location>
</feature>
<feature type="glycosylation site" description="N-linked (GlcNAc...) asparagine" evidence="12">
    <location>
        <position position="138"/>
    </location>
</feature>
<feature type="glycosylation site" description="N-linked (GlcNAc...) asparagine" evidence="12">
    <location>
        <position position="172"/>
    </location>
</feature>
<feature type="glycosylation site" description="N-linked (GlcNAc...) asparagine" evidence="4">
    <location>
        <position position="205"/>
    </location>
</feature>
<feature type="disulfide bond" evidence="3">
    <location>
        <begin position="159"/>
        <end position="185"/>
    </location>
</feature>
<feature type="disulfide bond" evidence="3">
    <location>
        <begin position="238"/>
        <end position="269"/>
    </location>
</feature>
<feature type="splice variant" id="VSP_010823" description="In isoform 2." evidence="13">
    <location>
        <begin position="77"/>
        <end position="132"/>
    </location>
</feature>
<feature type="mutagenesis site" description="Abolishes basal channel activity without affecting channel activation by a synthetic agonist; when associated with N-111 and N-112." evidence="12">
    <original>D</original>
    <variation>N</variation>
    <location>
        <position position="108"/>
    </location>
</feature>
<feature type="mutagenesis site" description="Abolishes basal channel activity without affecting channel activation by a synthetic agonist; when associated with N-108 and N-112." evidence="12">
    <original>D</original>
    <variation>N</variation>
    <location>
        <position position="111"/>
    </location>
</feature>
<feature type="mutagenesis site" description="Abolishes basal channel activity without affecting channel activation by a synthetic agonist; when associated with N-108 and N-111." evidence="12">
    <original>D</original>
    <variation>N</variation>
    <location>
        <position position="112"/>
    </location>
</feature>
<feature type="mutagenesis site" description="Increases inhibition by lumenal H(+). Decreases inhibition by lumenal H(+); when associated with A-283." evidence="5">
    <original>H</original>
    <variation>A</variation>
    <location>
        <position position="252"/>
    </location>
</feature>
<feature type="mutagenesis site" description="Increases inhibition by lumenal H(+). Decreases inhibition by lumenal H(+); when associated with A-283." evidence="5">
    <original>H</original>
    <variation>A</variation>
    <location>
        <position position="273"/>
    </location>
</feature>
<feature type="mutagenesis site" description="Constitutive active channel; abolishes inhibition by lumenal H(+); retains the Ca(2+)-dependent inactivation of the Ca(2+) current. Decreases inhibition by lumenal H(+); when associated with A-252. Decreases inhibition by lumenal H(+); when associated with A-273." evidence="5">
    <original>H</original>
    <variation>A</variation>
    <location>
        <position position="283"/>
    </location>
</feature>
<feature type="mutagenesis site" description="Increases inhibition by lumenal H(+)." evidence="5">
    <original>H</original>
    <variation>R</variation>
    <location>
        <position position="283"/>
    </location>
</feature>
<feature type="mutagenesis site" description="Constitutive active channel; abolishes inhibition by lumenal H(+); increases the pore diameter." evidence="5 9">
    <original>A</original>
    <variation>P</variation>
    <location>
        <position position="419"/>
    </location>
</feature>
<feature type="mutagenesis site" description="Nearly abolishes channel activation by a synthetic agonist." evidence="12">
    <original>Y</original>
    <variation>A</variation>
    <location>
        <position position="423"/>
    </location>
</feature>
<feature type="mutagenesis site" description="Constitutive active channel; greatly impairs inhibition by lumenal Na(+)." evidence="9">
    <original>E</original>
    <variation>A</variation>
    <location>
        <position position="449"/>
    </location>
</feature>
<feature type="mutagenesis site" description="Abolishes channel activity." evidence="9">
    <original>E</original>
    <variation>K</variation>
    <location>
        <position position="449"/>
    </location>
</feature>
<feature type="mutagenesis site" description="Enhances endocytosis." evidence="7">
    <original>DD</original>
    <variation>KK</variation>
    <location>
        <begin position="458"/>
        <end position="459"/>
    </location>
</feature>
<feature type="mutagenesis site" description="Nearly abolishes channel activity; inhibits starvation-induced autophagy." evidence="7">
    <original>D</original>
    <variation>K</variation>
    <location>
        <position position="458"/>
    </location>
</feature>
<feature type="mutagenesis site" description="Decreases in Ca(2+) permeability and selectivity; decreases channel pore dynamic behavior." evidence="9">
    <original>D</original>
    <variation>A</variation>
    <location>
        <position position="459"/>
    </location>
</feature>
<feature type="mutagenesis site" description="Nearly abolishes channel activation by a synthetic agonist." evidence="12">
    <original>F</original>
    <variation>A</variation>
    <location>
        <position position="497"/>
    </location>
</feature>
<feature type="sequence conflict" description="In Ref. 2; BAA91951." evidence="16" ref="2">
    <original>S</original>
    <variation>C</variation>
    <location>
        <position position="9"/>
    </location>
</feature>
<keyword id="KW-0002">3D-structure</keyword>
<keyword id="KW-0025">Alternative splicing</keyword>
<keyword id="KW-1003">Cell membrane</keyword>
<keyword id="KW-0968">Cytoplasmic vesicle</keyword>
<keyword id="KW-1015">Disulfide bond</keyword>
<keyword id="KW-0967">Endosome</keyword>
<keyword id="KW-0325">Glycoprotein</keyword>
<keyword id="KW-0407">Ion channel</keyword>
<keyword id="KW-0406">Ion transport</keyword>
<keyword id="KW-0446">Lipid-binding</keyword>
<keyword id="KW-0458">Lysosome</keyword>
<keyword id="KW-0472">Membrane</keyword>
<keyword id="KW-1267">Proteomics identification</keyword>
<keyword id="KW-1185">Reference proteome</keyword>
<keyword id="KW-0812">Transmembrane</keyword>
<keyword id="KW-1133">Transmembrane helix</keyword>
<keyword id="KW-0813">Transport</keyword>
<protein>
    <recommendedName>
        <fullName evidence="15">Mucolipin-3</fullName>
    </recommendedName>
    <alternativeName>
        <fullName>Transient receptor potential channel mucolipin 3</fullName>
        <shortName evidence="14">TRPML3</shortName>
    </alternativeName>
</protein>
<comment type="function">
    <text evidence="2 5 6 7 8 9 10 11 12 16">Nonselective cation channel probably playing a role in the regulation of membrane trafficking events. Acts as a Ca(2+)-permeable cation channel with inwardly rectifying activity (PubMed:18369318, PubMed:19497048, PubMed:19522758, PubMed:19885840, PubMed:29106414). Mediates release of Ca(2+) from endosomes to the cytoplasm, contributes to endosomal acidification and is involved in the regulation of membrane trafficking and fusion in the endosomal pathway (PubMed:21245134). Also permeable to Mg(2+), Na(+) and K(+) (By similarity). Does not seem to act as mechanosensory transduction channel in inner ear sensory hair cells. Proposed to play a critical role at the cochlear stereocilia ankle-link region during hair-bundle growth (By similarity). Involved in the regulation of autophagy (PubMed:19522758). Through association with GABARAPL2 may be involved in autophagosome formation possibly providing Ca(2+) for the fusion process (By similarity). Through a possible and probably tissue-specific heteromerization with MCOLN1 may be at least in part involved in many lysosome-dependent cellular events (PubMed:19885840). Possible heteromeric ion channel assemblies with TRPV5 show pharmacological similarity with TRPML3 (PubMed:23469151).</text>
</comment>
<comment type="catalytic activity">
    <reaction evidence="5">
        <text>Ca(2+)(in) = Ca(2+)(out)</text>
        <dbReference type="Rhea" id="RHEA:29671"/>
        <dbReference type="ChEBI" id="CHEBI:29108"/>
    </reaction>
</comment>
<comment type="catalytic activity">
    <reaction evidence="2">
        <text>K(+)(in) = K(+)(out)</text>
        <dbReference type="Rhea" id="RHEA:29463"/>
        <dbReference type="ChEBI" id="CHEBI:29103"/>
    </reaction>
</comment>
<comment type="catalytic activity">
    <reaction evidence="2">
        <text>Na(+)(in) = Na(+)(out)</text>
        <dbReference type="Rhea" id="RHEA:34963"/>
        <dbReference type="ChEBI" id="CHEBI:29101"/>
    </reaction>
</comment>
<comment type="activity regulation">
    <text evidence="1 5 9 12">Channel activity is activated by PtdIns(3,5)P2 (phosphatidylinositol 3,5-bisphosphate) (By similarity). Inhibited by lumenal H(+) and Na(+) (PubMed:18369318, PubMed:29106414). The channel pore shows dynamic behavior and undergoes spontaneous, Ca(2+)-dependent modulation when conducting Ca(2+) (PubMed:20378547).</text>
</comment>
<comment type="subunit">
    <text evidence="2 8 12 17">Homotetramer (PubMed:29106414). Can heterooligomerize with MCOLN1; heteromeric assemblies have different channel properties as compared to the respective homooligomers and may be tissue-specific (PubMed:19885840). May heterooligomerize with TRPV5 to form a functional distinct ion channel (PubMed:23469151). Interacts with GABARAPL2 (By similarity).</text>
</comment>
<comment type="subcellular location">
    <subcellularLocation>
        <location evidence="7 12">Cell membrane</location>
        <topology evidence="12">Multi-pass membrane protein</topology>
    </subcellularLocation>
    <subcellularLocation>
        <location evidence="6 7">Early endosome membrane</location>
        <topology evidence="12">Multi-pass membrane protein</topology>
    </subcellularLocation>
    <subcellularLocation>
        <location evidence="6 7">Late endosome membrane</location>
        <topology evidence="12">Multi-pass membrane protein</topology>
    </subcellularLocation>
    <subcellularLocation>
        <location evidence="7">Lysosome membrane</location>
        <topology evidence="12">Multi-pass membrane protein</topology>
    </subcellularLocation>
    <subcellularLocation>
        <location evidence="7">Cytoplasmic vesicle</location>
        <location evidence="7">Autophagosome membrane</location>
    </subcellularLocation>
    <text evidence="2 7">Recycles between the plasma membrane and intracellular compartments by a dynamin-dependent endocytic pathway (PubMed:19522758). Under normal conditions, only a very minor proportion is present at the cell membrane (PubMed:19522758). In the cochlea located at the base of stereocilia near the position of the ankle links (By similarity).</text>
</comment>
<comment type="alternative products">
    <event type="alternative splicing"/>
    <isoform>
        <id>Q8TDD5-1</id>
        <name>1</name>
        <sequence type="displayed"/>
    </isoform>
    <isoform>
        <id>Q8TDD5-2</id>
        <name>2</name>
        <sequence type="described" ref="VSP_010823"/>
    </isoform>
</comment>
<comment type="domain">
    <text evidence="3">The most N-terminal extracellular/lumenal domain (referred to as I-II linker or polycystin-mucolipin domain) contributes to a structure with a four-fold rotational symmetry in a tetrameric assembly; the structure contains a central highly electronegative pore with a 14 A diameter. The pore is critical for Ca(2+) and pH regulation. The protruding structure formed by the I-II linkers may contain all the interaction sites with lipids and proteins in the endolysosomal lumen.</text>
</comment>
<comment type="PTM">
    <text evidence="8">N-glycosylated.</text>
</comment>
<comment type="similarity">
    <text evidence="16">Belongs to the transient receptor (TC 1.A.4) family. Polycystin subfamily. MCOLN3 sub-subfamily.</text>
</comment>
<proteinExistence type="evidence at protein level"/>
<sequence>MADPEVVVSSCSSHEEENRCNFNQQTSPSEELLLEDQMRRKLKFFFMNPCEKFWARGRKPWKLAIQILKIAMVTIQLVLFGLSNQMVVAFKEENTIAFKHLFLKGYMDRMDDTYAVYTQSDVYDQLIFAVNQYLQLYNVSVGNHAYENKGTKQSAMAICQHFYKRGNIYPGNDTFDIDPEIETECFFVEPDEPFHIGTPAENKLNLTLDFHRLLTVELQFKLKAINLQTVRHQELPDCYDFTLTITFDNKAHSGRIKISLDNDISIRECKDWHVSGSIQKNTHYMMIFDAFVILTCLVSLILCIRSVIRGLQLQQEFVNFFLLHYKKEVSVSDQMEFVNGWYIMIIISDILTIIGSILKMEIQAKSLTSYDVCSILLGTSTMLVWLGVIRYLGFFAKYNLLILTLQAALPNVIRFCCCAAMIYLGYCFCGWIVLGPYHDKFRSLNMVSECLFSLINGDDMFATFAKMQQKSYLVWLFSRIYLYSFISLFIYMILSLFIALITDTYETIKQYQQDGFPETELRTFISECKDLPNSGKYRLEDDPPVSLFCCCKK</sequence>
<name>MCLN3_HUMAN</name>